<reference key="1">
    <citation type="journal article" date="2007" name="ISME J.">
        <title>Population level functional diversity in a microbial community revealed by comparative genomic and metagenomic analyses.</title>
        <authorList>
            <person name="Bhaya D."/>
            <person name="Grossman A.R."/>
            <person name="Steunou A.-S."/>
            <person name="Khuri N."/>
            <person name="Cohan F.M."/>
            <person name="Hamamura N."/>
            <person name="Melendrez M.C."/>
            <person name="Bateson M.M."/>
            <person name="Ward D.M."/>
            <person name="Heidelberg J.F."/>
        </authorList>
    </citation>
    <scope>NUCLEOTIDE SEQUENCE [LARGE SCALE GENOMIC DNA]</scope>
    <source>
        <strain>JA-3-3Ab</strain>
    </source>
</reference>
<name>RS9_SYNJA</name>
<gene>
    <name evidence="1" type="primary">rpsI</name>
    <name evidence="1" type="synonym">rps9</name>
    <name type="ordered locus">CYA_1447</name>
</gene>
<accession>Q2JUJ9</accession>
<proteinExistence type="inferred from homology"/>
<organism>
    <name type="scientific">Synechococcus sp. (strain JA-3-3Ab)</name>
    <name type="common">Cyanobacteria bacterium Yellowstone A-Prime</name>
    <dbReference type="NCBI Taxonomy" id="321327"/>
    <lineage>
        <taxon>Bacteria</taxon>
        <taxon>Bacillati</taxon>
        <taxon>Cyanobacteriota</taxon>
        <taxon>Cyanophyceae</taxon>
        <taxon>Synechococcales</taxon>
        <taxon>Synechococcaceae</taxon>
        <taxon>Synechococcus</taxon>
    </lineage>
</organism>
<sequence length="137" mass="15081">MTQAASSQRAVYWGTGRRKTAVARVRLVPGTGKLIINDRPGDQYLQYQEALLASVKAPLELLGLENSYDILVRAHGGGVHGQADAIKLGVARALCEVDPANRGPLKTEGYLKRDPRAVERKKYGLRKARKAPQYSKR</sequence>
<protein>
    <recommendedName>
        <fullName evidence="1">Small ribosomal subunit protein uS9</fullName>
    </recommendedName>
    <alternativeName>
        <fullName evidence="3">30S ribosomal protein S9</fullName>
    </alternativeName>
</protein>
<feature type="chain" id="PRO_1000051352" description="Small ribosomal subunit protein uS9">
    <location>
        <begin position="1"/>
        <end position="137"/>
    </location>
</feature>
<feature type="region of interest" description="Disordered" evidence="2">
    <location>
        <begin position="105"/>
        <end position="137"/>
    </location>
</feature>
<feature type="compositionally biased region" description="Basic and acidic residues" evidence="2">
    <location>
        <begin position="109"/>
        <end position="122"/>
    </location>
</feature>
<feature type="compositionally biased region" description="Basic residues" evidence="2">
    <location>
        <begin position="123"/>
        <end position="137"/>
    </location>
</feature>
<keyword id="KW-0687">Ribonucleoprotein</keyword>
<keyword id="KW-0689">Ribosomal protein</keyword>
<comment type="similarity">
    <text evidence="1">Belongs to the universal ribosomal protein uS9 family.</text>
</comment>
<dbReference type="EMBL" id="CP000239">
    <property type="protein sequence ID" value="ABC99615.1"/>
    <property type="molecule type" value="Genomic_DNA"/>
</dbReference>
<dbReference type="RefSeq" id="WP_011430293.1">
    <property type="nucleotide sequence ID" value="NC_007775.1"/>
</dbReference>
<dbReference type="SMR" id="Q2JUJ9"/>
<dbReference type="STRING" id="321327.CYA_1447"/>
<dbReference type="KEGG" id="cya:CYA_1447"/>
<dbReference type="eggNOG" id="COG0103">
    <property type="taxonomic scope" value="Bacteria"/>
</dbReference>
<dbReference type="HOGENOM" id="CLU_046483_2_1_3"/>
<dbReference type="OrthoDB" id="9803965at2"/>
<dbReference type="Proteomes" id="UP000008818">
    <property type="component" value="Chromosome"/>
</dbReference>
<dbReference type="GO" id="GO:0005737">
    <property type="term" value="C:cytoplasm"/>
    <property type="evidence" value="ECO:0007669"/>
    <property type="project" value="UniProtKB-ARBA"/>
</dbReference>
<dbReference type="GO" id="GO:0015935">
    <property type="term" value="C:small ribosomal subunit"/>
    <property type="evidence" value="ECO:0007669"/>
    <property type="project" value="TreeGrafter"/>
</dbReference>
<dbReference type="GO" id="GO:0003723">
    <property type="term" value="F:RNA binding"/>
    <property type="evidence" value="ECO:0007669"/>
    <property type="project" value="TreeGrafter"/>
</dbReference>
<dbReference type="GO" id="GO:0003735">
    <property type="term" value="F:structural constituent of ribosome"/>
    <property type="evidence" value="ECO:0007669"/>
    <property type="project" value="InterPro"/>
</dbReference>
<dbReference type="GO" id="GO:0006412">
    <property type="term" value="P:translation"/>
    <property type="evidence" value="ECO:0007669"/>
    <property type="project" value="UniProtKB-UniRule"/>
</dbReference>
<dbReference type="FunFam" id="3.30.230.10:FF:000001">
    <property type="entry name" value="30S ribosomal protein S9"/>
    <property type="match status" value="1"/>
</dbReference>
<dbReference type="Gene3D" id="3.30.230.10">
    <property type="match status" value="1"/>
</dbReference>
<dbReference type="HAMAP" id="MF_00532_B">
    <property type="entry name" value="Ribosomal_uS9_B"/>
    <property type="match status" value="1"/>
</dbReference>
<dbReference type="InterPro" id="IPR020568">
    <property type="entry name" value="Ribosomal_Su5_D2-typ_SF"/>
</dbReference>
<dbReference type="InterPro" id="IPR000754">
    <property type="entry name" value="Ribosomal_uS9"/>
</dbReference>
<dbReference type="InterPro" id="IPR023035">
    <property type="entry name" value="Ribosomal_uS9_bac/plastid"/>
</dbReference>
<dbReference type="InterPro" id="IPR020574">
    <property type="entry name" value="Ribosomal_uS9_CS"/>
</dbReference>
<dbReference type="InterPro" id="IPR014721">
    <property type="entry name" value="Ribsml_uS5_D2-typ_fold_subgr"/>
</dbReference>
<dbReference type="NCBIfam" id="NF001099">
    <property type="entry name" value="PRK00132.1"/>
    <property type="match status" value="1"/>
</dbReference>
<dbReference type="PANTHER" id="PTHR21569">
    <property type="entry name" value="RIBOSOMAL PROTEIN S9"/>
    <property type="match status" value="1"/>
</dbReference>
<dbReference type="PANTHER" id="PTHR21569:SF1">
    <property type="entry name" value="SMALL RIBOSOMAL SUBUNIT PROTEIN US9M"/>
    <property type="match status" value="1"/>
</dbReference>
<dbReference type="Pfam" id="PF00380">
    <property type="entry name" value="Ribosomal_S9"/>
    <property type="match status" value="1"/>
</dbReference>
<dbReference type="SUPFAM" id="SSF54211">
    <property type="entry name" value="Ribosomal protein S5 domain 2-like"/>
    <property type="match status" value="1"/>
</dbReference>
<dbReference type="PROSITE" id="PS00360">
    <property type="entry name" value="RIBOSOMAL_S9"/>
    <property type="match status" value="1"/>
</dbReference>
<evidence type="ECO:0000255" key="1">
    <source>
        <dbReference type="HAMAP-Rule" id="MF_00532"/>
    </source>
</evidence>
<evidence type="ECO:0000256" key="2">
    <source>
        <dbReference type="SAM" id="MobiDB-lite"/>
    </source>
</evidence>
<evidence type="ECO:0000305" key="3"/>